<keyword id="KW-0963">Cytoplasm</keyword>
<keyword id="KW-0460">Magnesium</keyword>
<keyword id="KW-0479">Metal-binding</keyword>
<keyword id="KW-0548">Nucleotidyltransferase</keyword>
<keyword id="KW-1185">Reference proteome</keyword>
<keyword id="KW-0694">RNA-binding</keyword>
<keyword id="KW-0808">Transferase</keyword>
<organism>
    <name type="scientific">Corynebacterium kroppenstedtii (strain DSM 44385 / JCM 11950 / CIP 105744 / CCUG 35717)</name>
    <dbReference type="NCBI Taxonomy" id="645127"/>
    <lineage>
        <taxon>Bacteria</taxon>
        <taxon>Bacillati</taxon>
        <taxon>Actinomycetota</taxon>
        <taxon>Actinomycetes</taxon>
        <taxon>Mycobacteriales</taxon>
        <taxon>Corynebacteriaceae</taxon>
        <taxon>Corynebacterium</taxon>
    </lineage>
</organism>
<gene>
    <name evidence="1" type="primary">pnp</name>
    <name type="ordered locus">ckrop_1133</name>
</gene>
<reference key="1">
    <citation type="journal article" date="2008" name="J. Biotechnol.">
        <title>Ultrafast pyrosequencing of Corynebacterium kroppenstedtii DSM44385 revealed insights into the physiology of a lipophilic corynebacterium that lacks mycolic acids.</title>
        <authorList>
            <person name="Tauch A."/>
            <person name="Schneider J."/>
            <person name="Szczepanowski R."/>
            <person name="Tilker A."/>
            <person name="Viehoever P."/>
            <person name="Gartemann K.-H."/>
            <person name="Arnold W."/>
            <person name="Blom J."/>
            <person name="Brinkrolf K."/>
            <person name="Brune I."/>
            <person name="Goetker S."/>
            <person name="Weisshaar B."/>
            <person name="Goesmann A."/>
            <person name="Droege M."/>
            <person name="Puehler A."/>
        </authorList>
    </citation>
    <scope>NUCLEOTIDE SEQUENCE [LARGE SCALE GENOMIC DNA]</scope>
    <source>
        <strain>DSM 44385 / JCM 11950 / CIP 105744 / CCUG 35717</strain>
    </source>
</reference>
<sequence length="775" mass="83942">MIARGTHREGRIPPFMTNNHSVFYDEEFGTHSVEATIDNGDFGSRTIRLETGQLARQANGSVVAYLDEDTMMLSTTTASSKPREGFDFFPLTVDVEERMYAAGRIPGSFFRREGRPGTDAILACRLIDRPLRPTFVKGLRNEVQVIVTVMSLDPKDMYDVVAINAASASTQLSGLPVSGPVGGVRMALIVDDDHEDGQWVAFPTREQHESALFEMVVAGRLTDEQVPEKPRKGRRRGRKSSPRKKTDNVAIMMVEAGATETVVERVNDGAPAPTESVVAEGIEAAKPFIAELCGAQQALRQAVDPETEEFPLFPPYGADVLAAVDSEAKGRISDIMSIADKQERDEALSSDMDDTVEALLEEFPEREAEIRAAHNAVTKEVVRSRILADGFRIDGRGVEDIRDLDVEVDLVPRAHGSSLFQRGETQILGVTTLDTLKMEQQVDSLGPVDHRRYIHHYNFPPYSTGETGRVGSPKRREIGHGALAERALKPMIPSRDDFPYTIRQVSEALGSNGSTSMGSVCASTLSLYNAGVPLKAPVAGIAMGLVSGEVKGKMTYVTLTDILGAEDAFGDMDFKVAGTEDFITALQLDTKLDGIPSDVLAGALKQAREARLEILNTMAEVIDEPDPMSDYAPRITTISVPVSKIGEVIGPKGKNINQITEDTGARVSIEDDGTVFISATSGGSAEAAVDRINEIANPQLPKVGERFLGTVVKTTAFGAFVSILPNRDGLVHISKLGGKKRIEKVEDVVNVGDKLEVEIADIDNRGKISLVPVDD</sequence>
<protein>
    <recommendedName>
        <fullName evidence="1">Polyribonucleotide nucleotidyltransferase</fullName>
        <ecNumber evidence="1">2.7.7.8</ecNumber>
    </recommendedName>
    <alternativeName>
        <fullName evidence="1">Polynucleotide phosphorylase</fullName>
        <shortName evidence="1">PNPase</shortName>
    </alternativeName>
</protein>
<proteinExistence type="inferred from homology"/>
<dbReference type="EC" id="2.7.7.8" evidence="1"/>
<dbReference type="EMBL" id="CP001620">
    <property type="protein sequence ID" value="ACR17879.1"/>
    <property type="molecule type" value="Genomic_DNA"/>
</dbReference>
<dbReference type="SMR" id="C4LJ74"/>
<dbReference type="STRING" id="645127.ckrop_1133"/>
<dbReference type="KEGG" id="ckp:ckrop_1133"/>
<dbReference type="eggNOG" id="COG1185">
    <property type="taxonomic scope" value="Bacteria"/>
</dbReference>
<dbReference type="HOGENOM" id="CLU_004217_2_2_11"/>
<dbReference type="OrthoDB" id="9804305at2"/>
<dbReference type="Proteomes" id="UP000001473">
    <property type="component" value="Chromosome"/>
</dbReference>
<dbReference type="GO" id="GO:0005829">
    <property type="term" value="C:cytosol"/>
    <property type="evidence" value="ECO:0007669"/>
    <property type="project" value="TreeGrafter"/>
</dbReference>
<dbReference type="GO" id="GO:0000175">
    <property type="term" value="F:3'-5'-RNA exonuclease activity"/>
    <property type="evidence" value="ECO:0007669"/>
    <property type="project" value="TreeGrafter"/>
</dbReference>
<dbReference type="GO" id="GO:0000287">
    <property type="term" value="F:magnesium ion binding"/>
    <property type="evidence" value="ECO:0007669"/>
    <property type="project" value="UniProtKB-UniRule"/>
</dbReference>
<dbReference type="GO" id="GO:0004654">
    <property type="term" value="F:polyribonucleotide nucleotidyltransferase activity"/>
    <property type="evidence" value="ECO:0007669"/>
    <property type="project" value="UniProtKB-UniRule"/>
</dbReference>
<dbReference type="GO" id="GO:0003723">
    <property type="term" value="F:RNA binding"/>
    <property type="evidence" value="ECO:0007669"/>
    <property type="project" value="UniProtKB-UniRule"/>
</dbReference>
<dbReference type="GO" id="GO:0006402">
    <property type="term" value="P:mRNA catabolic process"/>
    <property type="evidence" value="ECO:0007669"/>
    <property type="project" value="UniProtKB-UniRule"/>
</dbReference>
<dbReference type="GO" id="GO:0006396">
    <property type="term" value="P:RNA processing"/>
    <property type="evidence" value="ECO:0007669"/>
    <property type="project" value="InterPro"/>
</dbReference>
<dbReference type="CDD" id="cd02393">
    <property type="entry name" value="KH-I_PNPase"/>
    <property type="match status" value="1"/>
</dbReference>
<dbReference type="CDD" id="cd11364">
    <property type="entry name" value="RNase_PH_PNPase_2"/>
    <property type="match status" value="1"/>
</dbReference>
<dbReference type="CDD" id="cd04472">
    <property type="entry name" value="S1_PNPase"/>
    <property type="match status" value="1"/>
</dbReference>
<dbReference type="FunFam" id="2.40.50.140:FF:000069">
    <property type="entry name" value="Polyribonucleotide nucleotidyltransferase"/>
    <property type="match status" value="1"/>
</dbReference>
<dbReference type="FunFam" id="3.30.1370.10:FF:000001">
    <property type="entry name" value="Polyribonucleotide nucleotidyltransferase"/>
    <property type="match status" value="1"/>
</dbReference>
<dbReference type="FunFam" id="3.30.230.70:FF:000001">
    <property type="entry name" value="Polyribonucleotide nucleotidyltransferase"/>
    <property type="match status" value="1"/>
</dbReference>
<dbReference type="FunFam" id="3.30.230.70:FF:000002">
    <property type="entry name" value="Polyribonucleotide nucleotidyltransferase"/>
    <property type="match status" value="1"/>
</dbReference>
<dbReference type="Gene3D" id="3.30.230.70">
    <property type="entry name" value="GHMP Kinase, N-terminal domain"/>
    <property type="match status" value="2"/>
</dbReference>
<dbReference type="Gene3D" id="3.30.1370.10">
    <property type="entry name" value="K Homology domain, type 1"/>
    <property type="match status" value="1"/>
</dbReference>
<dbReference type="Gene3D" id="2.40.50.140">
    <property type="entry name" value="Nucleic acid-binding proteins"/>
    <property type="match status" value="1"/>
</dbReference>
<dbReference type="HAMAP" id="MF_01595">
    <property type="entry name" value="PNPase"/>
    <property type="match status" value="1"/>
</dbReference>
<dbReference type="InterPro" id="IPR001247">
    <property type="entry name" value="ExoRNase_PH_dom1"/>
</dbReference>
<dbReference type="InterPro" id="IPR036345">
    <property type="entry name" value="ExoRNase_PH_dom2_sf"/>
</dbReference>
<dbReference type="InterPro" id="IPR014069">
    <property type="entry name" value="GPSI/PNP"/>
</dbReference>
<dbReference type="InterPro" id="IPR004087">
    <property type="entry name" value="KH_dom"/>
</dbReference>
<dbReference type="InterPro" id="IPR004088">
    <property type="entry name" value="KH_dom_type_1"/>
</dbReference>
<dbReference type="InterPro" id="IPR036612">
    <property type="entry name" value="KH_dom_type_1_sf"/>
</dbReference>
<dbReference type="InterPro" id="IPR012340">
    <property type="entry name" value="NA-bd_OB-fold"/>
</dbReference>
<dbReference type="InterPro" id="IPR012162">
    <property type="entry name" value="PNPase"/>
</dbReference>
<dbReference type="InterPro" id="IPR027408">
    <property type="entry name" value="PNPase/RNase_PH_dom_sf"/>
</dbReference>
<dbReference type="InterPro" id="IPR015848">
    <property type="entry name" value="PNPase_PH_RNA-bd_bac/org-type"/>
</dbReference>
<dbReference type="InterPro" id="IPR036456">
    <property type="entry name" value="PNPase_PH_RNA-bd_sf"/>
</dbReference>
<dbReference type="InterPro" id="IPR020568">
    <property type="entry name" value="Ribosomal_Su5_D2-typ_SF"/>
</dbReference>
<dbReference type="InterPro" id="IPR003029">
    <property type="entry name" value="S1_domain"/>
</dbReference>
<dbReference type="NCBIfam" id="TIGR03591">
    <property type="entry name" value="polynuc_phos"/>
    <property type="match status" value="1"/>
</dbReference>
<dbReference type="NCBIfam" id="TIGR02696">
    <property type="entry name" value="pppGpp_PNP"/>
    <property type="match status" value="1"/>
</dbReference>
<dbReference type="NCBIfam" id="NF008805">
    <property type="entry name" value="PRK11824.1"/>
    <property type="match status" value="1"/>
</dbReference>
<dbReference type="PANTHER" id="PTHR11252">
    <property type="entry name" value="POLYRIBONUCLEOTIDE NUCLEOTIDYLTRANSFERASE"/>
    <property type="match status" value="1"/>
</dbReference>
<dbReference type="PANTHER" id="PTHR11252:SF0">
    <property type="entry name" value="POLYRIBONUCLEOTIDE NUCLEOTIDYLTRANSFERASE 1, MITOCHONDRIAL"/>
    <property type="match status" value="1"/>
</dbReference>
<dbReference type="Pfam" id="PF00013">
    <property type="entry name" value="KH_1"/>
    <property type="match status" value="1"/>
</dbReference>
<dbReference type="Pfam" id="PF03726">
    <property type="entry name" value="PNPase"/>
    <property type="match status" value="1"/>
</dbReference>
<dbReference type="Pfam" id="PF01138">
    <property type="entry name" value="RNase_PH"/>
    <property type="match status" value="2"/>
</dbReference>
<dbReference type="Pfam" id="PF00575">
    <property type="entry name" value="S1"/>
    <property type="match status" value="1"/>
</dbReference>
<dbReference type="PIRSF" id="PIRSF005499">
    <property type="entry name" value="PNPase"/>
    <property type="match status" value="1"/>
</dbReference>
<dbReference type="SMART" id="SM00322">
    <property type="entry name" value="KH"/>
    <property type="match status" value="1"/>
</dbReference>
<dbReference type="SMART" id="SM00316">
    <property type="entry name" value="S1"/>
    <property type="match status" value="1"/>
</dbReference>
<dbReference type="SUPFAM" id="SSF54791">
    <property type="entry name" value="Eukaryotic type KH-domain (KH-domain type I)"/>
    <property type="match status" value="1"/>
</dbReference>
<dbReference type="SUPFAM" id="SSF50249">
    <property type="entry name" value="Nucleic acid-binding proteins"/>
    <property type="match status" value="1"/>
</dbReference>
<dbReference type="SUPFAM" id="SSF46915">
    <property type="entry name" value="Polynucleotide phosphorylase/guanosine pentaphosphate synthase (PNPase/GPSI), domain 3"/>
    <property type="match status" value="1"/>
</dbReference>
<dbReference type="SUPFAM" id="SSF55666">
    <property type="entry name" value="Ribonuclease PH domain 2-like"/>
    <property type="match status" value="2"/>
</dbReference>
<dbReference type="SUPFAM" id="SSF54211">
    <property type="entry name" value="Ribosomal protein S5 domain 2-like"/>
    <property type="match status" value="2"/>
</dbReference>
<dbReference type="PROSITE" id="PS50084">
    <property type="entry name" value="KH_TYPE_1"/>
    <property type="match status" value="1"/>
</dbReference>
<dbReference type="PROSITE" id="PS50126">
    <property type="entry name" value="S1"/>
    <property type="match status" value="1"/>
</dbReference>
<evidence type="ECO:0000255" key="1">
    <source>
        <dbReference type="HAMAP-Rule" id="MF_01595"/>
    </source>
</evidence>
<evidence type="ECO:0000256" key="2">
    <source>
        <dbReference type="SAM" id="MobiDB-lite"/>
    </source>
</evidence>
<name>PNP_CORK4</name>
<feature type="chain" id="PRO_0000382421" description="Polyribonucleotide nucleotidyltransferase">
    <location>
        <begin position="1"/>
        <end position="775"/>
    </location>
</feature>
<feature type="domain" description="KH" evidence="1">
    <location>
        <begin position="633"/>
        <end position="692"/>
    </location>
</feature>
<feature type="domain" description="S1 motif" evidence="1">
    <location>
        <begin position="704"/>
        <end position="773"/>
    </location>
</feature>
<feature type="region of interest" description="Disordered" evidence="2">
    <location>
        <begin position="223"/>
        <end position="247"/>
    </location>
</feature>
<feature type="compositionally biased region" description="Basic residues" evidence="2">
    <location>
        <begin position="231"/>
        <end position="243"/>
    </location>
</feature>
<feature type="binding site" evidence="1">
    <location>
        <position position="567"/>
    </location>
    <ligand>
        <name>Mg(2+)</name>
        <dbReference type="ChEBI" id="CHEBI:18420"/>
    </ligand>
</feature>
<feature type="binding site" evidence="1">
    <location>
        <position position="573"/>
    </location>
    <ligand>
        <name>Mg(2+)</name>
        <dbReference type="ChEBI" id="CHEBI:18420"/>
    </ligand>
</feature>
<accession>C4LJ74</accession>
<comment type="function">
    <text evidence="1">Involved in mRNA degradation. Catalyzes the phosphorolysis of single-stranded polyribonucleotides processively in the 3'- to 5'-direction.</text>
</comment>
<comment type="catalytic activity">
    <reaction evidence="1">
        <text>RNA(n+1) + phosphate = RNA(n) + a ribonucleoside 5'-diphosphate</text>
        <dbReference type="Rhea" id="RHEA:22096"/>
        <dbReference type="Rhea" id="RHEA-COMP:14527"/>
        <dbReference type="Rhea" id="RHEA-COMP:17342"/>
        <dbReference type="ChEBI" id="CHEBI:43474"/>
        <dbReference type="ChEBI" id="CHEBI:57930"/>
        <dbReference type="ChEBI" id="CHEBI:140395"/>
        <dbReference type="EC" id="2.7.7.8"/>
    </reaction>
</comment>
<comment type="cofactor">
    <cofactor evidence="1">
        <name>Mg(2+)</name>
        <dbReference type="ChEBI" id="CHEBI:18420"/>
    </cofactor>
</comment>
<comment type="subcellular location">
    <subcellularLocation>
        <location evidence="1">Cytoplasm</location>
    </subcellularLocation>
</comment>
<comment type="similarity">
    <text evidence="1">Belongs to the polyribonucleotide nucleotidyltransferase family.</text>
</comment>